<evidence type="ECO:0000255" key="1">
    <source>
        <dbReference type="HAMAP-Rule" id="MF_01018"/>
    </source>
</evidence>
<evidence type="ECO:0007829" key="2">
    <source>
        <dbReference type="PDB" id="6FCC"/>
    </source>
</evidence>
<evidence type="ECO:0007829" key="3">
    <source>
        <dbReference type="PDB" id="6FCY"/>
    </source>
</evidence>
<accession>Q4FQF7</accession>
<gene>
    <name evidence="1" type="primary">hisG</name>
    <name type="ordered locus">Psyc_1903</name>
</gene>
<sequence>MTEVTNSLPTSGLLNEANDEFLGLTLALSKGRILEETMPLLRAAGVELLEDPEASRKLIFPTSNPNVRVLILRASDVPTYVEHGAADFGVAGKDVLLEHGANHVYELLDLKIAQCKLMTAGVKDAPLPNRRLRIATKYVNVARAYFASQGQQVDVIKLYGSMELAPLVGLGDLIVDVVDTGNTLRANGLEARDHICDVSSRLIVNQVSYKRKFALLEPILDSFKNSINSTS</sequence>
<reference key="1">
    <citation type="journal article" date="2010" name="Appl. Environ. Microbiol.">
        <title>The genome sequence of Psychrobacter arcticus 273-4, a psychroactive Siberian permafrost bacterium, reveals mechanisms for adaptation to low-temperature growth.</title>
        <authorList>
            <person name="Ayala-del-Rio H.L."/>
            <person name="Chain P.S."/>
            <person name="Grzymski J.J."/>
            <person name="Ponder M.A."/>
            <person name="Ivanova N."/>
            <person name="Bergholz P.W."/>
            <person name="Di Bartolo G."/>
            <person name="Hauser L."/>
            <person name="Land M."/>
            <person name="Bakermans C."/>
            <person name="Rodrigues D."/>
            <person name="Klappenbach J."/>
            <person name="Zarka D."/>
            <person name="Larimer F."/>
            <person name="Richardson P."/>
            <person name="Murray A."/>
            <person name="Thomashow M."/>
            <person name="Tiedje J.M."/>
        </authorList>
    </citation>
    <scope>NUCLEOTIDE SEQUENCE [LARGE SCALE GENOMIC DNA]</scope>
    <source>
        <strain>DSM 17307 / VKM B-2377 / 273-4</strain>
    </source>
</reference>
<organism>
    <name type="scientific">Psychrobacter arcticus (strain DSM 17307 / VKM B-2377 / 273-4)</name>
    <dbReference type="NCBI Taxonomy" id="259536"/>
    <lineage>
        <taxon>Bacteria</taxon>
        <taxon>Pseudomonadati</taxon>
        <taxon>Pseudomonadota</taxon>
        <taxon>Gammaproteobacteria</taxon>
        <taxon>Moraxellales</taxon>
        <taxon>Moraxellaceae</taxon>
        <taxon>Psychrobacter</taxon>
    </lineage>
</organism>
<proteinExistence type="evidence at protein level"/>
<name>HIS1_PSYA2</name>
<dbReference type="EC" id="2.4.2.17" evidence="1"/>
<dbReference type="EMBL" id="CP000082">
    <property type="protein sequence ID" value="AAZ19751.1"/>
    <property type="molecule type" value="Genomic_DNA"/>
</dbReference>
<dbReference type="RefSeq" id="WP_011281160.1">
    <property type="nucleotide sequence ID" value="NC_007204.1"/>
</dbReference>
<dbReference type="PDB" id="5M8H">
    <property type="method" value="X-ray"/>
    <property type="resolution" value="2.34 A"/>
    <property type="chains" value="E/F/G/H=1-231"/>
</dbReference>
<dbReference type="PDB" id="6FCA">
    <property type="method" value="X-ray"/>
    <property type="resolution" value="2.09 A"/>
    <property type="chains" value="A=1-231"/>
</dbReference>
<dbReference type="PDB" id="6FCC">
    <property type="method" value="X-ray"/>
    <property type="resolution" value="1.89 A"/>
    <property type="chains" value="A=1-231"/>
</dbReference>
<dbReference type="PDB" id="6FCT">
    <property type="method" value="X-ray"/>
    <property type="resolution" value="1.89 A"/>
    <property type="chains" value="A=1-231"/>
</dbReference>
<dbReference type="PDB" id="6FCW">
    <property type="method" value="X-ray"/>
    <property type="resolution" value="2.00 A"/>
    <property type="chains" value="A=1-231"/>
</dbReference>
<dbReference type="PDB" id="6FCY">
    <property type="method" value="X-ray"/>
    <property type="resolution" value="1.96 A"/>
    <property type="chains" value="A=1-231"/>
</dbReference>
<dbReference type="PDB" id="6FD9">
    <property type="method" value="X-ray"/>
    <property type="resolution" value="2.20 A"/>
    <property type="chains" value="A=1-231"/>
</dbReference>
<dbReference type="PDB" id="6FTT">
    <property type="method" value="X-ray"/>
    <property type="resolution" value="2.29 A"/>
    <property type="chains" value="E/F/G/H=1-231"/>
</dbReference>
<dbReference type="PDB" id="6FU2">
    <property type="method" value="X-ray"/>
    <property type="resolution" value="2.71 A"/>
    <property type="chains" value="C/D=1-231"/>
</dbReference>
<dbReference type="PDB" id="6FU7">
    <property type="method" value="X-ray"/>
    <property type="resolution" value="2.31 A"/>
    <property type="chains" value="C/D=1-231"/>
</dbReference>
<dbReference type="PDB" id="6FUA">
    <property type="method" value="X-ray"/>
    <property type="resolution" value="2.80 A"/>
    <property type="chains" value="C/D=1-231"/>
</dbReference>
<dbReference type="PDB" id="6R02">
    <property type="method" value="X-ray"/>
    <property type="resolution" value="2.65 A"/>
    <property type="chains" value="E/F/G/H=1-231"/>
</dbReference>
<dbReference type="PDB" id="7Z6R">
    <property type="method" value="X-ray"/>
    <property type="resolution" value="2.55 A"/>
    <property type="chains" value="C/D=1-231"/>
</dbReference>
<dbReference type="PDB" id="7Z8U">
    <property type="method" value="X-ray"/>
    <property type="resolution" value="2.00 A"/>
    <property type="chains" value="A=1-231"/>
</dbReference>
<dbReference type="PDBsum" id="5M8H"/>
<dbReference type="PDBsum" id="6FCA"/>
<dbReference type="PDBsum" id="6FCC"/>
<dbReference type="PDBsum" id="6FCT"/>
<dbReference type="PDBsum" id="6FCW"/>
<dbReference type="PDBsum" id="6FCY"/>
<dbReference type="PDBsum" id="6FD9"/>
<dbReference type="PDBsum" id="6FTT"/>
<dbReference type="PDBsum" id="6FU2"/>
<dbReference type="PDBsum" id="6FU7"/>
<dbReference type="PDBsum" id="6FUA"/>
<dbReference type="PDBsum" id="6R02"/>
<dbReference type="PDBsum" id="7Z6R"/>
<dbReference type="PDBsum" id="7Z8U"/>
<dbReference type="SMR" id="Q4FQF7"/>
<dbReference type="STRING" id="259536.Psyc_1903"/>
<dbReference type="KEGG" id="par:Psyc_1903"/>
<dbReference type="eggNOG" id="COG0040">
    <property type="taxonomic scope" value="Bacteria"/>
</dbReference>
<dbReference type="HOGENOM" id="CLU_038115_2_0_6"/>
<dbReference type="OrthoDB" id="9801867at2"/>
<dbReference type="BRENDA" id="2.4.2.17">
    <property type="organism ID" value="13705"/>
</dbReference>
<dbReference type="UniPathway" id="UPA00031">
    <property type="reaction ID" value="UER00006"/>
</dbReference>
<dbReference type="Proteomes" id="UP000000546">
    <property type="component" value="Chromosome"/>
</dbReference>
<dbReference type="GO" id="GO:0005737">
    <property type="term" value="C:cytoplasm"/>
    <property type="evidence" value="ECO:0007669"/>
    <property type="project" value="UniProtKB-SubCell"/>
</dbReference>
<dbReference type="GO" id="GO:0005524">
    <property type="term" value="F:ATP binding"/>
    <property type="evidence" value="ECO:0007669"/>
    <property type="project" value="UniProtKB-KW"/>
</dbReference>
<dbReference type="GO" id="GO:0003879">
    <property type="term" value="F:ATP phosphoribosyltransferase activity"/>
    <property type="evidence" value="ECO:0007669"/>
    <property type="project" value="UniProtKB-UniRule"/>
</dbReference>
<dbReference type="GO" id="GO:0000105">
    <property type="term" value="P:L-histidine biosynthetic process"/>
    <property type="evidence" value="ECO:0007669"/>
    <property type="project" value="UniProtKB-UniRule"/>
</dbReference>
<dbReference type="CDD" id="cd13595">
    <property type="entry name" value="PBP2_HisGs"/>
    <property type="match status" value="1"/>
</dbReference>
<dbReference type="FunFam" id="3.40.190.10:FF:000008">
    <property type="entry name" value="ATP phosphoribosyltransferase"/>
    <property type="match status" value="1"/>
</dbReference>
<dbReference type="FunFam" id="3.40.190.10:FF:000011">
    <property type="entry name" value="ATP phosphoribosyltransferase"/>
    <property type="match status" value="1"/>
</dbReference>
<dbReference type="Gene3D" id="3.40.190.10">
    <property type="entry name" value="Periplasmic binding protein-like II"/>
    <property type="match status" value="2"/>
</dbReference>
<dbReference type="HAMAP" id="MF_01018">
    <property type="entry name" value="HisG_Short"/>
    <property type="match status" value="1"/>
</dbReference>
<dbReference type="InterPro" id="IPR013820">
    <property type="entry name" value="ATP_PRibTrfase_cat"/>
</dbReference>
<dbReference type="InterPro" id="IPR018198">
    <property type="entry name" value="ATP_PRibTrfase_CS"/>
</dbReference>
<dbReference type="InterPro" id="IPR001348">
    <property type="entry name" value="ATP_PRibTrfase_HisG"/>
</dbReference>
<dbReference type="InterPro" id="IPR024893">
    <property type="entry name" value="ATP_PRibTrfase_HisG_short"/>
</dbReference>
<dbReference type="NCBIfam" id="TIGR00070">
    <property type="entry name" value="hisG"/>
    <property type="match status" value="1"/>
</dbReference>
<dbReference type="PANTHER" id="PTHR21403:SF8">
    <property type="entry name" value="ATP PHOSPHORIBOSYLTRANSFERASE"/>
    <property type="match status" value="1"/>
</dbReference>
<dbReference type="PANTHER" id="PTHR21403">
    <property type="entry name" value="ATP PHOSPHORIBOSYLTRANSFERASE ATP-PRTASE"/>
    <property type="match status" value="1"/>
</dbReference>
<dbReference type="Pfam" id="PF01634">
    <property type="entry name" value="HisG"/>
    <property type="match status" value="1"/>
</dbReference>
<dbReference type="SUPFAM" id="SSF53850">
    <property type="entry name" value="Periplasmic binding protein-like II"/>
    <property type="match status" value="1"/>
</dbReference>
<dbReference type="PROSITE" id="PS01316">
    <property type="entry name" value="ATP_P_PHORIBOSYLTR"/>
    <property type="match status" value="1"/>
</dbReference>
<protein>
    <recommendedName>
        <fullName evidence="1">ATP phosphoribosyltransferase</fullName>
        <shortName evidence="1">ATP-PRT</shortName>
        <shortName evidence="1">ATP-PRTase</shortName>
        <ecNumber evidence="1">2.4.2.17</ecNumber>
    </recommendedName>
</protein>
<feature type="chain" id="PRO_0000229330" description="ATP phosphoribosyltransferase">
    <location>
        <begin position="1"/>
        <end position="231"/>
    </location>
</feature>
<feature type="strand" evidence="2">
    <location>
        <begin position="23"/>
        <end position="29"/>
    </location>
</feature>
<feature type="helix" evidence="2">
    <location>
        <begin position="32"/>
        <end position="43"/>
    </location>
</feature>
<feature type="strand" evidence="2">
    <location>
        <begin position="48"/>
        <end position="50"/>
    </location>
</feature>
<feature type="helix" evidence="2">
    <location>
        <begin position="52"/>
        <end position="54"/>
    </location>
</feature>
<feature type="strand" evidence="2">
    <location>
        <begin position="58"/>
        <end position="64"/>
    </location>
</feature>
<feature type="strand" evidence="2">
    <location>
        <begin position="67"/>
        <end position="72"/>
    </location>
</feature>
<feature type="helix" evidence="2">
    <location>
        <begin position="74"/>
        <end position="76"/>
    </location>
</feature>
<feature type="helix" evidence="2">
    <location>
        <begin position="77"/>
        <end position="82"/>
    </location>
</feature>
<feature type="strand" evidence="2">
    <location>
        <begin position="85"/>
        <end position="92"/>
    </location>
</feature>
<feature type="helix" evidence="2">
    <location>
        <begin position="93"/>
        <end position="99"/>
    </location>
</feature>
<feature type="strand" evidence="2">
    <location>
        <begin position="104"/>
        <end position="122"/>
    </location>
</feature>
<feature type="strand" evidence="3">
    <location>
        <begin position="129"/>
        <end position="131"/>
    </location>
</feature>
<feature type="strand" evidence="2">
    <location>
        <begin position="133"/>
        <end position="137"/>
    </location>
</feature>
<feature type="helix" evidence="2">
    <location>
        <begin position="139"/>
        <end position="148"/>
    </location>
</feature>
<feature type="strand" evidence="2">
    <location>
        <begin position="154"/>
        <end position="157"/>
    </location>
</feature>
<feature type="helix" evidence="2">
    <location>
        <begin position="162"/>
        <end position="168"/>
    </location>
</feature>
<feature type="strand" evidence="2">
    <location>
        <begin position="172"/>
        <end position="181"/>
    </location>
</feature>
<feature type="helix" evidence="2">
    <location>
        <begin position="182"/>
        <end position="186"/>
    </location>
</feature>
<feature type="strand" evidence="2">
    <location>
        <begin position="189"/>
        <end position="204"/>
    </location>
</feature>
<feature type="helix" evidence="2">
    <location>
        <begin position="208"/>
        <end position="211"/>
    </location>
</feature>
<feature type="helix" evidence="2">
    <location>
        <begin position="213"/>
        <end position="227"/>
    </location>
</feature>
<comment type="function">
    <text evidence="1">Catalyzes the condensation of ATP and 5-phosphoribose 1-diphosphate to form N'-(5'-phosphoribosyl)-ATP (PR-ATP). Has a crucial role in the pathway because the rate of histidine biosynthesis seems to be controlled primarily by regulation of HisG enzymatic activity.</text>
</comment>
<comment type="catalytic activity">
    <reaction evidence="1">
        <text>1-(5-phospho-beta-D-ribosyl)-ATP + diphosphate = 5-phospho-alpha-D-ribose 1-diphosphate + ATP</text>
        <dbReference type="Rhea" id="RHEA:18473"/>
        <dbReference type="ChEBI" id="CHEBI:30616"/>
        <dbReference type="ChEBI" id="CHEBI:33019"/>
        <dbReference type="ChEBI" id="CHEBI:58017"/>
        <dbReference type="ChEBI" id="CHEBI:73183"/>
        <dbReference type="EC" id="2.4.2.17"/>
    </reaction>
</comment>
<comment type="pathway">
    <text evidence="1">Amino-acid biosynthesis; L-histidine biosynthesis; L-histidine from 5-phospho-alpha-D-ribose 1-diphosphate: step 1/9.</text>
</comment>
<comment type="subunit">
    <text evidence="1">Heteromultimer composed of HisG and HisZ subunits.</text>
</comment>
<comment type="subcellular location">
    <subcellularLocation>
        <location evidence="1">Cytoplasm</location>
    </subcellularLocation>
</comment>
<comment type="domain">
    <text>Lacks the C-terminal regulatory region which is replaced by HisZ.</text>
</comment>
<comment type="similarity">
    <text evidence="1">Belongs to the ATP phosphoribosyltransferase family. Short subfamily.</text>
</comment>
<keyword id="KW-0002">3D-structure</keyword>
<keyword id="KW-0028">Amino-acid biosynthesis</keyword>
<keyword id="KW-0067">ATP-binding</keyword>
<keyword id="KW-0963">Cytoplasm</keyword>
<keyword id="KW-0328">Glycosyltransferase</keyword>
<keyword id="KW-0368">Histidine biosynthesis</keyword>
<keyword id="KW-0547">Nucleotide-binding</keyword>
<keyword id="KW-1185">Reference proteome</keyword>
<keyword id="KW-0808">Transferase</keyword>